<dbReference type="EC" id="2.1.1.176" evidence="1"/>
<dbReference type="EMBL" id="AM286415">
    <property type="protein sequence ID" value="CAL13910.1"/>
    <property type="molecule type" value="Genomic_DNA"/>
</dbReference>
<dbReference type="RefSeq" id="WP_011817317.1">
    <property type="nucleotide sequence ID" value="NC_008800.1"/>
</dbReference>
<dbReference type="RefSeq" id="YP_001008036.1">
    <property type="nucleotide sequence ID" value="NC_008800.1"/>
</dbReference>
<dbReference type="SMR" id="A1JRZ3"/>
<dbReference type="KEGG" id="yen:YE3891"/>
<dbReference type="PATRIC" id="fig|393305.7.peg.4141"/>
<dbReference type="eggNOG" id="COG0144">
    <property type="taxonomic scope" value="Bacteria"/>
</dbReference>
<dbReference type="eggNOG" id="COG0781">
    <property type="taxonomic scope" value="Bacteria"/>
</dbReference>
<dbReference type="HOGENOM" id="CLU_005316_0_4_6"/>
<dbReference type="OrthoDB" id="9810297at2"/>
<dbReference type="Proteomes" id="UP000000642">
    <property type="component" value="Chromosome"/>
</dbReference>
<dbReference type="GO" id="GO:0005829">
    <property type="term" value="C:cytosol"/>
    <property type="evidence" value="ECO:0007669"/>
    <property type="project" value="TreeGrafter"/>
</dbReference>
<dbReference type="GO" id="GO:0003723">
    <property type="term" value="F:RNA binding"/>
    <property type="evidence" value="ECO:0007669"/>
    <property type="project" value="UniProtKB-KW"/>
</dbReference>
<dbReference type="GO" id="GO:0009383">
    <property type="term" value="F:rRNA (cytosine-C5-)-methyltransferase activity"/>
    <property type="evidence" value="ECO:0007669"/>
    <property type="project" value="TreeGrafter"/>
</dbReference>
<dbReference type="GO" id="GO:0006355">
    <property type="term" value="P:regulation of DNA-templated transcription"/>
    <property type="evidence" value="ECO:0007669"/>
    <property type="project" value="InterPro"/>
</dbReference>
<dbReference type="GO" id="GO:0070475">
    <property type="term" value="P:rRNA base methylation"/>
    <property type="evidence" value="ECO:0007669"/>
    <property type="project" value="TreeGrafter"/>
</dbReference>
<dbReference type="CDD" id="cd02440">
    <property type="entry name" value="AdoMet_MTases"/>
    <property type="match status" value="1"/>
</dbReference>
<dbReference type="CDD" id="cd00620">
    <property type="entry name" value="Methyltransferase_Sun"/>
    <property type="match status" value="1"/>
</dbReference>
<dbReference type="FunFam" id="1.10.940.10:FF:000002">
    <property type="entry name" value="Ribosomal RNA small subunit methyltransferase B"/>
    <property type="match status" value="1"/>
</dbReference>
<dbReference type="FunFam" id="3.30.70.1170:FF:000002">
    <property type="entry name" value="Ribosomal RNA small subunit methyltransferase B"/>
    <property type="match status" value="1"/>
</dbReference>
<dbReference type="FunFam" id="3.40.50.150:FF:000022">
    <property type="entry name" value="Ribosomal RNA small subunit methyltransferase B"/>
    <property type="match status" value="1"/>
</dbReference>
<dbReference type="Gene3D" id="1.10.287.730">
    <property type="entry name" value="Helix hairpin bin"/>
    <property type="match status" value="1"/>
</dbReference>
<dbReference type="Gene3D" id="1.10.940.10">
    <property type="entry name" value="NusB-like"/>
    <property type="match status" value="1"/>
</dbReference>
<dbReference type="Gene3D" id="3.30.70.1170">
    <property type="entry name" value="Sun protein, domain 3"/>
    <property type="match status" value="1"/>
</dbReference>
<dbReference type="Gene3D" id="3.40.50.150">
    <property type="entry name" value="Vaccinia Virus protein VP39"/>
    <property type="match status" value="1"/>
</dbReference>
<dbReference type="HAMAP" id="MF_01856">
    <property type="entry name" value="16SrRNA_methyltr_B"/>
    <property type="match status" value="1"/>
</dbReference>
<dbReference type="InterPro" id="IPR049560">
    <property type="entry name" value="MeTrfase_RsmB-F_NOP2_cat"/>
</dbReference>
<dbReference type="InterPro" id="IPR001678">
    <property type="entry name" value="MeTrfase_RsmB-F_NOP2_dom"/>
</dbReference>
<dbReference type="InterPro" id="IPR035926">
    <property type="entry name" value="NusB-like_sf"/>
</dbReference>
<dbReference type="InterPro" id="IPR006027">
    <property type="entry name" value="NusB_RsmB_TIM44"/>
</dbReference>
<dbReference type="InterPro" id="IPR023267">
    <property type="entry name" value="RCMT"/>
</dbReference>
<dbReference type="InterPro" id="IPR004573">
    <property type="entry name" value="rRNA_ssu_MeTfrase_B"/>
</dbReference>
<dbReference type="InterPro" id="IPR023541">
    <property type="entry name" value="rRNA_ssu_MeTfrase_B_ent"/>
</dbReference>
<dbReference type="InterPro" id="IPR054728">
    <property type="entry name" value="RsmB-like_ferredoxin"/>
</dbReference>
<dbReference type="InterPro" id="IPR048019">
    <property type="entry name" value="RsmB-like_N"/>
</dbReference>
<dbReference type="InterPro" id="IPR018314">
    <property type="entry name" value="RsmB/NOL1/NOP2-like_CS"/>
</dbReference>
<dbReference type="InterPro" id="IPR029063">
    <property type="entry name" value="SAM-dependent_MTases_sf"/>
</dbReference>
<dbReference type="NCBIfam" id="NF008149">
    <property type="entry name" value="PRK10901.1"/>
    <property type="match status" value="1"/>
</dbReference>
<dbReference type="NCBIfam" id="NF011494">
    <property type="entry name" value="PRK14902.1"/>
    <property type="match status" value="1"/>
</dbReference>
<dbReference type="NCBIfam" id="TIGR00563">
    <property type="entry name" value="rsmB"/>
    <property type="match status" value="1"/>
</dbReference>
<dbReference type="PANTHER" id="PTHR22807:SF61">
    <property type="entry name" value="NOL1_NOP2_SUN FAMILY PROTEIN _ ANTITERMINATION NUSB DOMAIN-CONTAINING PROTEIN"/>
    <property type="match status" value="1"/>
</dbReference>
<dbReference type="PANTHER" id="PTHR22807">
    <property type="entry name" value="NOP2 YEAST -RELATED NOL1/NOP2/FMU SUN DOMAIN-CONTAINING"/>
    <property type="match status" value="1"/>
</dbReference>
<dbReference type="Pfam" id="PF01189">
    <property type="entry name" value="Methyltr_RsmB-F"/>
    <property type="match status" value="1"/>
</dbReference>
<dbReference type="Pfam" id="PF01029">
    <property type="entry name" value="NusB"/>
    <property type="match status" value="1"/>
</dbReference>
<dbReference type="Pfam" id="PF22458">
    <property type="entry name" value="RsmF-B_ferredox"/>
    <property type="match status" value="1"/>
</dbReference>
<dbReference type="PRINTS" id="PR02008">
    <property type="entry name" value="RCMTFAMILY"/>
</dbReference>
<dbReference type="SUPFAM" id="SSF48013">
    <property type="entry name" value="NusB-like"/>
    <property type="match status" value="1"/>
</dbReference>
<dbReference type="SUPFAM" id="SSF53335">
    <property type="entry name" value="S-adenosyl-L-methionine-dependent methyltransferases"/>
    <property type="match status" value="1"/>
</dbReference>
<dbReference type="PROSITE" id="PS01153">
    <property type="entry name" value="NOL1_NOP2_SUN"/>
    <property type="match status" value="1"/>
</dbReference>
<dbReference type="PROSITE" id="PS51686">
    <property type="entry name" value="SAM_MT_RSMB_NOP"/>
    <property type="match status" value="1"/>
</dbReference>
<gene>
    <name evidence="1" type="primary">rsmB</name>
    <name evidence="1" type="synonym">sun</name>
    <name type="ordered locus">YE3891</name>
</gene>
<protein>
    <recommendedName>
        <fullName evidence="1">Ribosomal RNA small subunit methyltransferase B</fullName>
        <ecNumber evidence="1">2.1.1.176</ecNumber>
    </recommendedName>
    <alternativeName>
        <fullName evidence="1">16S rRNA m5C967 methyltransferase</fullName>
    </alternativeName>
    <alternativeName>
        <fullName evidence="1">rRNA (cytosine-C(5)-)-methyltransferase RsmB</fullName>
    </alternativeName>
</protein>
<organism>
    <name type="scientific">Yersinia enterocolitica serotype O:8 / biotype 1B (strain NCTC 13174 / 8081)</name>
    <dbReference type="NCBI Taxonomy" id="393305"/>
    <lineage>
        <taxon>Bacteria</taxon>
        <taxon>Pseudomonadati</taxon>
        <taxon>Pseudomonadota</taxon>
        <taxon>Gammaproteobacteria</taxon>
        <taxon>Enterobacterales</taxon>
        <taxon>Yersiniaceae</taxon>
        <taxon>Yersinia</taxon>
    </lineage>
</organism>
<reference key="1">
    <citation type="journal article" date="2006" name="PLoS Genet.">
        <title>The complete genome sequence and comparative genome analysis of the high pathogenicity Yersinia enterocolitica strain 8081.</title>
        <authorList>
            <person name="Thomson N.R."/>
            <person name="Howard S."/>
            <person name="Wren B.W."/>
            <person name="Holden M.T.G."/>
            <person name="Crossman L."/>
            <person name="Challis G.L."/>
            <person name="Churcher C."/>
            <person name="Mungall K."/>
            <person name="Brooks K."/>
            <person name="Chillingworth T."/>
            <person name="Feltwell T."/>
            <person name="Abdellah Z."/>
            <person name="Hauser H."/>
            <person name="Jagels K."/>
            <person name="Maddison M."/>
            <person name="Moule S."/>
            <person name="Sanders M."/>
            <person name="Whitehead S."/>
            <person name="Quail M.A."/>
            <person name="Dougan G."/>
            <person name="Parkhill J."/>
            <person name="Prentice M.B."/>
        </authorList>
    </citation>
    <scope>NUCLEOTIDE SEQUENCE [LARGE SCALE GENOMIC DNA]</scope>
    <source>
        <strain>NCTC 13174 / 8081</strain>
    </source>
</reference>
<name>RSMB_YERE8</name>
<comment type="function">
    <text evidence="1">Specifically methylates the cytosine at position 967 (m5C967) of 16S rRNA.</text>
</comment>
<comment type="catalytic activity">
    <reaction evidence="1">
        <text>cytidine(967) in 16S rRNA + S-adenosyl-L-methionine = 5-methylcytidine(967) in 16S rRNA + S-adenosyl-L-homocysteine + H(+)</text>
        <dbReference type="Rhea" id="RHEA:42748"/>
        <dbReference type="Rhea" id="RHEA-COMP:10219"/>
        <dbReference type="Rhea" id="RHEA-COMP:10220"/>
        <dbReference type="ChEBI" id="CHEBI:15378"/>
        <dbReference type="ChEBI" id="CHEBI:57856"/>
        <dbReference type="ChEBI" id="CHEBI:59789"/>
        <dbReference type="ChEBI" id="CHEBI:74483"/>
        <dbReference type="ChEBI" id="CHEBI:82748"/>
        <dbReference type="EC" id="2.1.1.176"/>
    </reaction>
</comment>
<comment type="subcellular location">
    <subcellularLocation>
        <location evidence="1">Cytoplasm</location>
    </subcellularLocation>
</comment>
<comment type="similarity">
    <text evidence="1">Belongs to the class I-like SAM-binding methyltransferase superfamily. RsmB/NOP family.</text>
</comment>
<feature type="chain" id="PRO_0000366182" description="Ribosomal RNA small subunit methyltransferase B">
    <location>
        <begin position="1"/>
        <end position="429"/>
    </location>
</feature>
<feature type="active site" description="Nucleophile" evidence="1">
    <location>
        <position position="375"/>
    </location>
</feature>
<feature type="binding site" evidence="1">
    <location>
        <begin position="254"/>
        <end position="260"/>
    </location>
    <ligand>
        <name>S-adenosyl-L-methionine</name>
        <dbReference type="ChEBI" id="CHEBI:59789"/>
    </ligand>
</feature>
<feature type="binding site" evidence="1">
    <location>
        <position position="277"/>
    </location>
    <ligand>
        <name>S-adenosyl-L-methionine</name>
        <dbReference type="ChEBI" id="CHEBI:59789"/>
    </ligand>
</feature>
<feature type="binding site" evidence="1">
    <location>
        <position position="303"/>
    </location>
    <ligand>
        <name>S-adenosyl-L-methionine</name>
        <dbReference type="ChEBI" id="CHEBI:59789"/>
    </ligand>
</feature>
<feature type="binding site" evidence="1">
    <location>
        <position position="322"/>
    </location>
    <ligand>
        <name>S-adenosyl-L-methionine</name>
        <dbReference type="ChEBI" id="CHEBI:59789"/>
    </ligand>
</feature>
<sequence length="429" mass="48486">MKNTYNLRSIAAKAISQVLDQGQSLSTVLPGLQKSISDKDRALLQELCFGTLRVLPQLEWCIQQLMARPMTGKQRVFHYLIMVGLYQLIYTRIPPHAALAETVEGATALKRPQLKGLINGVLRQFQRQQVELLERAANNDSHYLHPSWLLARIKLAYPDQWQQILDANNQKPPMWLRVNRLHHSRIEYLELLKQANIEALPHDFYPDAVRLITPCAVSDLPGFELGWVTVQDASAQGCVDLLDPQDGEQILDLCAAPGGKTTHILEAAPKVHVLAVDIDEQRLSRVKENLQRLRLHADVRVGDGRTPDEWCGDQQFDRILLDAPCSATGVIRRHPDIKWLRRDSDIAELAQLQSEIIEAIWPKLKKGGVMVYATCSILPEENQQQIATFLQRHSEADLVETGTVSALGRQNLPHPEDGDGFYYAKLIKR</sequence>
<evidence type="ECO:0000255" key="1">
    <source>
        <dbReference type="HAMAP-Rule" id="MF_01856"/>
    </source>
</evidence>
<keyword id="KW-0963">Cytoplasm</keyword>
<keyword id="KW-0489">Methyltransferase</keyword>
<keyword id="KW-0694">RNA-binding</keyword>
<keyword id="KW-0698">rRNA processing</keyword>
<keyword id="KW-0949">S-adenosyl-L-methionine</keyword>
<keyword id="KW-0808">Transferase</keyword>
<proteinExistence type="inferred from homology"/>
<accession>A1JRZ3</accession>